<reference key="1">
    <citation type="journal article" date="2008" name="DNA Res.">
        <title>Complete genome sequence of Finegoldia magna, an anaerobic opportunistic pathogen.</title>
        <authorList>
            <person name="Goto T."/>
            <person name="Yamashita A."/>
            <person name="Hirakawa H."/>
            <person name="Matsutani M."/>
            <person name="Todo K."/>
            <person name="Ohshima K."/>
            <person name="Toh H."/>
            <person name="Miyamoto K."/>
            <person name="Kuhara S."/>
            <person name="Hattori M."/>
            <person name="Shimizu T."/>
            <person name="Akimoto S."/>
        </authorList>
    </citation>
    <scope>NUCLEOTIDE SEQUENCE [LARGE SCALE GENOMIC DNA]</scope>
    <source>
        <strain>ATCC 29328 / DSM 20472 / WAL 2508</strain>
    </source>
</reference>
<dbReference type="EMBL" id="AP008971">
    <property type="protein sequence ID" value="BAG09039.1"/>
    <property type="molecule type" value="Genomic_DNA"/>
</dbReference>
<dbReference type="RefSeq" id="WP_012291239.1">
    <property type="nucleotide sequence ID" value="NC_010376.1"/>
</dbReference>
<dbReference type="SMR" id="B0S3U9"/>
<dbReference type="STRING" id="334413.FMG_1621"/>
<dbReference type="KEGG" id="fma:FMG_1621"/>
<dbReference type="eggNOG" id="COG1058">
    <property type="taxonomic scope" value="Bacteria"/>
</dbReference>
<dbReference type="eggNOG" id="COG1546">
    <property type="taxonomic scope" value="Bacteria"/>
</dbReference>
<dbReference type="HOGENOM" id="CLU_030805_9_3_9"/>
<dbReference type="Proteomes" id="UP000001319">
    <property type="component" value="Chromosome"/>
</dbReference>
<dbReference type="CDD" id="cd00885">
    <property type="entry name" value="cinA"/>
    <property type="match status" value="1"/>
</dbReference>
<dbReference type="Gene3D" id="3.30.70.2860">
    <property type="match status" value="1"/>
</dbReference>
<dbReference type="Gene3D" id="3.90.950.20">
    <property type="entry name" value="CinA-like"/>
    <property type="match status" value="1"/>
</dbReference>
<dbReference type="Gene3D" id="3.40.980.10">
    <property type="entry name" value="MoaB/Mog-like domain"/>
    <property type="match status" value="1"/>
</dbReference>
<dbReference type="HAMAP" id="MF_00226_B">
    <property type="entry name" value="CinA_B"/>
    <property type="match status" value="1"/>
</dbReference>
<dbReference type="InterPro" id="IPR050101">
    <property type="entry name" value="CinA"/>
</dbReference>
<dbReference type="InterPro" id="IPR036653">
    <property type="entry name" value="CinA-like_C"/>
</dbReference>
<dbReference type="InterPro" id="IPR008136">
    <property type="entry name" value="CinA_C"/>
</dbReference>
<dbReference type="InterPro" id="IPR041424">
    <property type="entry name" value="CinA_KH"/>
</dbReference>
<dbReference type="InterPro" id="IPR008135">
    <property type="entry name" value="Competence-induced_CinA"/>
</dbReference>
<dbReference type="InterPro" id="IPR036425">
    <property type="entry name" value="MoaB/Mog-like_dom_sf"/>
</dbReference>
<dbReference type="InterPro" id="IPR001453">
    <property type="entry name" value="MoaB/Mog_dom"/>
</dbReference>
<dbReference type="NCBIfam" id="TIGR00200">
    <property type="entry name" value="cinA_nterm"/>
    <property type="match status" value="1"/>
</dbReference>
<dbReference type="NCBIfam" id="TIGR00199">
    <property type="entry name" value="PncC_domain"/>
    <property type="match status" value="1"/>
</dbReference>
<dbReference type="NCBIfam" id="NF001813">
    <property type="entry name" value="PRK00549.1"/>
    <property type="match status" value="1"/>
</dbReference>
<dbReference type="PANTHER" id="PTHR13939">
    <property type="entry name" value="NICOTINAMIDE-NUCLEOTIDE AMIDOHYDROLASE PNCC"/>
    <property type="match status" value="1"/>
</dbReference>
<dbReference type="PANTHER" id="PTHR13939:SF0">
    <property type="entry name" value="NMN AMIDOHYDROLASE-LIKE PROTEIN YFAY"/>
    <property type="match status" value="1"/>
</dbReference>
<dbReference type="Pfam" id="PF02464">
    <property type="entry name" value="CinA"/>
    <property type="match status" value="1"/>
</dbReference>
<dbReference type="Pfam" id="PF18146">
    <property type="entry name" value="CinA_KH"/>
    <property type="match status" value="1"/>
</dbReference>
<dbReference type="Pfam" id="PF00994">
    <property type="entry name" value="MoCF_biosynth"/>
    <property type="match status" value="1"/>
</dbReference>
<dbReference type="PIRSF" id="PIRSF006728">
    <property type="entry name" value="CinA"/>
    <property type="match status" value="1"/>
</dbReference>
<dbReference type="SMART" id="SM00852">
    <property type="entry name" value="MoCF_biosynth"/>
    <property type="match status" value="1"/>
</dbReference>
<dbReference type="SUPFAM" id="SSF142433">
    <property type="entry name" value="CinA-like"/>
    <property type="match status" value="1"/>
</dbReference>
<dbReference type="SUPFAM" id="SSF53218">
    <property type="entry name" value="Molybdenum cofactor biosynthesis proteins"/>
    <property type="match status" value="1"/>
</dbReference>
<feature type="chain" id="PRO_1000100320" description="Putative competence-damage inducible protein">
    <location>
        <begin position="1"/>
        <end position="410"/>
    </location>
</feature>
<proteinExistence type="inferred from homology"/>
<organism>
    <name type="scientific">Finegoldia magna (strain ATCC 29328 / DSM 20472 / WAL 2508)</name>
    <name type="common">Peptostreptococcus magnus</name>
    <dbReference type="NCBI Taxonomy" id="334413"/>
    <lineage>
        <taxon>Bacteria</taxon>
        <taxon>Bacillati</taxon>
        <taxon>Bacillota</taxon>
        <taxon>Tissierellia</taxon>
        <taxon>Tissierellales</taxon>
        <taxon>Peptoniphilaceae</taxon>
        <taxon>Finegoldia</taxon>
    </lineage>
</organism>
<gene>
    <name evidence="1" type="primary">cinA</name>
    <name type="ordered locus">FMG_1621</name>
</gene>
<protein>
    <recommendedName>
        <fullName evidence="1">Putative competence-damage inducible protein</fullName>
    </recommendedName>
</protein>
<sequence length="410" mass="46276">MKVQIIAVGTELLLGDTLDTNSNYLSIKMRELGFDVYKRVVVGDNYDRLYKEIEEGLQQNDLIITTGGLGPTEDDITKKCCCDCLGKKMVLNEKSYAKLRKYFNEDEKAIQGNIKQCMFPEDAIVFENFNGTADCALIENNGKRILFLPGPPAEMKPIYENQVQQVLEQFATDCIISETLNISILGEWDMNERVKDIIESSNNPTVAPYFKKDKRILRITAKASDRQTALDMIAKKKQELRDRLGMYVFGENDETIEESVYKVLKEHDLSIMTSESITGGMIASKLVNVSGVSDYLKRSLVVYSNEAKIELLGVKAETIDTYGVVSENVAFEMVERMFEKFNVDCSISTTGFASGENAGLVYVGLGYKNTIKTLKLQLHGERNKIRNRVSNRALAELRLMILENVSRETF</sequence>
<accession>B0S3U9</accession>
<name>CINA_FINM2</name>
<comment type="similarity">
    <text evidence="1">Belongs to the CinA family.</text>
</comment>
<keyword id="KW-1185">Reference proteome</keyword>
<evidence type="ECO:0000255" key="1">
    <source>
        <dbReference type="HAMAP-Rule" id="MF_00226"/>
    </source>
</evidence>